<organism>
    <name type="scientific">Arabidopsis thaliana</name>
    <name type="common">Mouse-ear cress</name>
    <dbReference type="NCBI Taxonomy" id="3702"/>
    <lineage>
        <taxon>Eukaryota</taxon>
        <taxon>Viridiplantae</taxon>
        <taxon>Streptophyta</taxon>
        <taxon>Embryophyta</taxon>
        <taxon>Tracheophyta</taxon>
        <taxon>Spermatophyta</taxon>
        <taxon>Magnoliopsida</taxon>
        <taxon>eudicotyledons</taxon>
        <taxon>Gunneridae</taxon>
        <taxon>Pentapetalae</taxon>
        <taxon>rosids</taxon>
        <taxon>malvids</taxon>
        <taxon>Brassicales</taxon>
        <taxon>Brassicaceae</taxon>
        <taxon>Camelineae</taxon>
        <taxon>Arabidopsis</taxon>
    </lineage>
</organism>
<dbReference type="EC" id="2.8.2.20" evidence="3"/>
<dbReference type="EMBL" id="AB511980">
    <property type="protein sequence ID" value="BAI22702.1"/>
    <property type="molecule type" value="mRNA"/>
</dbReference>
<dbReference type="EMBL" id="AC026875">
    <property type="protein sequence ID" value="AAF79842.1"/>
    <property type="molecule type" value="Genomic_DNA"/>
</dbReference>
<dbReference type="EMBL" id="CP002684">
    <property type="protein sequence ID" value="AEE28230.1"/>
    <property type="molecule type" value="Genomic_DNA"/>
</dbReference>
<dbReference type="EMBL" id="CP002684">
    <property type="protein sequence ID" value="ANM57804.1"/>
    <property type="molecule type" value="Genomic_DNA"/>
</dbReference>
<dbReference type="EMBL" id="BX842536">
    <property type="status" value="NOT_ANNOTATED_CDS"/>
    <property type="molecule type" value="mRNA"/>
</dbReference>
<dbReference type="PIR" id="B86215">
    <property type="entry name" value="B86215"/>
</dbReference>
<dbReference type="RefSeq" id="NP_001320287.1">
    <molecule id="Q3EDG5-1"/>
    <property type="nucleotide sequence ID" value="NM_001331750.1"/>
</dbReference>
<dbReference type="RefSeq" id="NP_563804.4">
    <molecule id="Q3EDG5-1"/>
    <property type="nucleotide sequence ID" value="NM_100677.4"/>
</dbReference>
<dbReference type="BioGRID" id="22559">
    <property type="interactions" value="1"/>
</dbReference>
<dbReference type="FunCoup" id="Q3EDG5">
    <property type="interactions" value="904"/>
</dbReference>
<dbReference type="STRING" id="3702.Q3EDG5"/>
<dbReference type="GlyCosmos" id="Q3EDG5">
    <property type="glycosylation" value="6 sites, No reported glycans"/>
</dbReference>
<dbReference type="GlyGen" id="Q3EDG5">
    <property type="glycosylation" value="6 sites"/>
</dbReference>
<dbReference type="iPTMnet" id="Q3EDG5"/>
<dbReference type="PaxDb" id="3702-AT1G08030.1"/>
<dbReference type="ProteomicsDB" id="232504">
    <molecule id="Q3EDG5-1"/>
</dbReference>
<dbReference type="EnsemblPlants" id="AT1G08030.1">
    <molecule id="Q3EDG5-1"/>
    <property type="protein sequence ID" value="AT1G08030.1"/>
    <property type="gene ID" value="AT1G08030"/>
</dbReference>
<dbReference type="EnsemblPlants" id="AT1G08030.2">
    <molecule id="Q3EDG5-1"/>
    <property type="protein sequence ID" value="AT1G08030.2"/>
    <property type="gene ID" value="AT1G08030"/>
</dbReference>
<dbReference type="GeneID" id="837318"/>
<dbReference type="Gramene" id="AT1G08030.1">
    <molecule id="Q3EDG5-1"/>
    <property type="protein sequence ID" value="AT1G08030.1"/>
    <property type="gene ID" value="AT1G08030"/>
</dbReference>
<dbReference type="Gramene" id="AT1G08030.2">
    <molecule id="Q3EDG5-1"/>
    <property type="protein sequence ID" value="AT1G08030.2"/>
    <property type="gene ID" value="AT1G08030"/>
</dbReference>
<dbReference type="KEGG" id="ath:AT1G08030"/>
<dbReference type="Araport" id="AT1G08030"/>
<dbReference type="TAIR" id="AT1G08030">
    <property type="gene designation" value="TPST"/>
</dbReference>
<dbReference type="eggNOG" id="ENOG502QVVW">
    <property type="taxonomic scope" value="Eukaryota"/>
</dbReference>
<dbReference type="HOGENOM" id="CLU_038430_0_0_1"/>
<dbReference type="InParanoid" id="Q3EDG5"/>
<dbReference type="OMA" id="SCSPWKV"/>
<dbReference type="OrthoDB" id="406981at2759"/>
<dbReference type="PhylomeDB" id="Q3EDG5"/>
<dbReference type="BRENDA" id="2.8.2.20">
    <property type="organism ID" value="399"/>
</dbReference>
<dbReference type="PRO" id="PR:Q3EDG5"/>
<dbReference type="Proteomes" id="UP000006548">
    <property type="component" value="Chromosome 1"/>
</dbReference>
<dbReference type="ExpressionAtlas" id="Q3EDG5">
    <property type="expression patterns" value="baseline and differential"/>
</dbReference>
<dbReference type="GO" id="GO:0005768">
    <property type="term" value="C:endosome"/>
    <property type="evidence" value="ECO:0007005"/>
    <property type="project" value="TAIR"/>
</dbReference>
<dbReference type="GO" id="GO:0005794">
    <property type="term" value="C:Golgi apparatus"/>
    <property type="evidence" value="ECO:0000314"/>
    <property type="project" value="TAIR"/>
</dbReference>
<dbReference type="GO" id="GO:0000139">
    <property type="term" value="C:Golgi membrane"/>
    <property type="evidence" value="ECO:0007669"/>
    <property type="project" value="UniProtKB-SubCell"/>
</dbReference>
<dbReference type="GO" id="GO:0005802">
    <property type="term" value="C:trans-Golgi network"/>
    <property type="evidence" value="ECO:0007005"/>
    <property type="project" value="TAIR"/>
</dbReference>
<dbReference type="GO" id="GO:0008476">
    <property type="term" value="F:protein-tyrosine sulfotransferase activity"/>
    <property type="evidence" value="ECO:0000314"/>
    <property type="project" value="TAIR"/>
</dbReference>
<dbReference type="GO" id="GO:0055070">
    <property type="term" value="P:copper ion homeostasis"/>
    <property type="evidence" value="ECO:0000315"/>
    <property type="project" value="TAIR"/>
</dbReference>
<dbReference type="GO" id="GO:0045087">
    <property type="term" value="P:innate immune response"/>
    <property type="evidence" value="ECO:0000315"/>
    <property type="project" value="TAIR"/>
</dbReference>
<dbReference type="GO" id="GO:0010366">
    <property type="term" value="P:negative regulation of ethylene biosynthetic process"/>
    <property type="evidence" value="ECO:0000315"/>
    <property type="project" value="TAIR"/>
</dbReference>
<dbReference type="GO" id="GO:0010468">
    <property type="term" value="P:regulation of gene expression"/>
    <property type="evidence" value="ECO:0000315"/>
    <property type="project" value="TAIR"/>
</dbReference>
<dbReference type="GO" id="GO:0010082">
    <property type="term" value="P:regulation of root meristem growth"/>
    <property type="evidence" value="ECO:0000315"/>
    <property type="project" value="TAIR"/>
</dbReference>
<dbReference type="GO" id="GO:0009733">
    <property type="term" value="P:response to auxin"/>
    <property type="evidence" value="ECO:0000270"/>
    <property type="project" value="TAIR"/>
</dbReference>
<dbReference type="GO" id="GO:0019827">
    <property type="term" value="P:stem cell population maintenance"/>
    <property type="evidence" value="ECO:0000315"/>
    <property type="project" value="TAIR"/>
</dbReference>
<dbReference type="Gene3D" id="3.40.50.300">
    <property type="entry name" value="P-loop containing nucleotide triphosphate hydrolases"/>
    <property type="match status" value="1"/>
</dbReference>
<dbReference type="InterPro" id="IPR010635">
    <property type="entry name" value="Heparan_SO4-6-sulfoTrfase"/>
</dbReference>
<dbReference type="InterPro" id="IPR027417">
    <property type="entry name" value="P-loop_NTPase"/>
</dbReference>
<dbReference type="InterPro" id="IPR005331">
    <property type="entry name" value="Sulfotransferase"/>
</dbReference>
<dbReference type="PANTHER" id="PTHR12812">
    <property type="entry name" value="HEPARAN SULFATE 6-O-SULFOTRANSFERASE 3"/>
    <property type="match status" value="1"/>
</dbReference>
<dbReference type="PANTHER" id="PTHR12812:SF0">
    <property type="entry name" value="HEPARAN-SULFATE 6-O-SULFOTRANSFERASE"/>
    <property type="match status" value="1"/>
</dbReference>
<dbReference type="Pfam" id="PF03567">
    <property type="entry name" value="Sulfotransfer_2"/>
    <property type="match status" value="1"/>
</dbReference>
<gene>
    <name type="primary">TPST</name>
    <name type="ordered locus">At1g08030</name>
    <name type="ORF">T6D22.29</name>
</gene>
<evidence type="ECO:0000250" key="1"/>
<evidence type="ECO:0000255" key="2"/>
<evidence type="ECO:0000269" key="3">
    <source>
    </source>
</evidence>
<evidence type="ECO:0000303" key="4">
    <source>
    </source>
</evidence>
<evidence type="ECO:0000305" key="5"/>
<name>TPST_ARATH</name>
<sequence length="500" mass="56989">MQMNSVWKLSLGLLLLSSVIGSFAELDFGHCETLVKKWADSSSSREEHVNKDKRSLKDLLFFLHVPRTGGRTYFHCFLRKLYDSSEECPRSYDKLHFNPRKEKCKLLATHDDYSLMAKLPRERTSVMTIVRDPIARVLSTYEFSVEVAARFLVHPNLTSASRMSSRIRKSNVISTLDIWPWKYLVPWMREDLFARRDARKLKEVVIIEDDNPYDMEEMLMPLHKYLDAPTAHDIIHNGATFQIAGLTNNSHLSEAHEVRHCVQKFKSLGESVLQVAKRRLDSMLYVGLTEEHRESASLFANVVGSQVLSQVVPSNATAKIKALKSEASVTISETGSDKSNIQNGTSEVTLNKAEAKSGNMTVKTLMEVYEGCITHLRKSQGTRRVNSLKRITPANFTRGTRTRVPKEVIQQIKSLNNLDVELYKYAKVIFAKEHELVSNKLISSSKRSIVDLPSELKSVLGEMGEEKLWKFVPVALMLLLIVLFFLFVNAKRRRTSKVKI</sequence>
<keyword id="KW-0025">Alternative splicing</keyword>
<keyword id="KW-0325">Glycoprotein</keyword>
<keyword id="KW-0333">Golgi apparatus</keyword>
<keyword id="KW-0472">Membrane</keyword>
<keyword id="KW-1185">Reference proteome</keyword>
<keyword id="KW-0732">Signal</keyword>
<keyword id="KW-0808">Transferase</keyword>
<keyword id="KW-0812">Transmembrane</keyword>
<keyword id="KW-1133">Transmembrane helix</keyword>
<feature type="signal peptide" evidence="2">
    <location>
        <begin position="1"/>
        <end position="24"/>
    </location>
</feature>
<feature type="chain" id="PRO_0000386565" description="Protein-tyrosine sulfotransferase">
    <location>
        <begin position="25"/>
        <end position="500"/>
    </location>
</feature>
<feature type="topological domain" description="Lumenal" evidence="2">
    <location>
        <begin position="25"/>
        <end position="467"/>
    </location>
</feature>
<feature type="transmembrane region" description="Helical" evidence="2">
    <location>
        <begin position="468"/>
        <end position="488"/>
    </location>
</feature>
<feature type="topological domain" description="Cytoplasmic" evidence="2">
    <location>
        <begin position="489"/>
        <end position="500"/>
    </location>
</feature>
<feature type="active site" evidence="1">
    <location>
        <position position="121"/>
    </location>
</feature>
<feature type="active site" evidence="1">
    <location>
        <position position="142"/>
    </location>
</feature>
<feature type="glycosylation site" description="N-linked (GlcNAc...) asparagine" evidence="2">
    <location>
        <position position="156"/>
    </location>
</feature>
<feature type="glycosylation site" description="N-linked (GlcNAc...) asparagine" evidence="2">
    <location>
        <position position="248"/>
    </location>
</feature>
<feature type="glycosylation site" description="N-linked (GlcNAc...) asparagine" evidence="2">
    <location>
        <position position="315"/>
    </location>
</feature>
<feature type="glycosylation site" description="N-linked (GlcNAc...) asparagine" evidence="2">
    <location>
        <position position="343"/>
    </location>
</feature>
<feature type="glycosylation site" description="N-linked (GlcNAc...) asparagine" evidence="2">
    <location>
        <position position="359"/>
    </location>
</feature>
<feature type="glycosylation site" description="N-linked (GlcNAc...) asparagine" evidence="2">
    <location>
        <position position="395"/>
    </location>
</feature>
<feature type="splice variant" id="VSP_038231" description="In isoform 2." evidence="4">
    <original>EA</original>
    <variation>GW</variation>
    <location>
        <begin position="326"/>
        <end position="327"/>
    </location>
</feature>
<feature type="splice variant" id="VSP_038232" description="In isoform 2." evidence="4">
    <location>
        <begin position="328"/>
        <end position="500"/>
    </location>
</feature>
<feature type="sequence conflict" description="In Ref. 1; BAI22702." evidence="5" ref="1">
    <original>SVWKLS</original>
    <variation>PVLKLA</variation>
    <location>
        <begin position="5"/>
        <end position="10"/>
    </location>
</feature>
<feature type="sequence conflict" description="In Ref. 1; BAI22702." evidence="5" ref="1">
    <original>T</original>
    <variation>R</variation>
    <location>
        <position position="33"/>
    </location>
</feature>
<feature type="sequence conflict" description="In Ref. 1; BAI22702." evidence="5" ref="1">
    <original>V</original>
    <variation>I</variation>
    <location>
        <position position="49"/>
    </location>
</feature>
<feature type="sequence conflict" description="In Ref. 1; BAI22702." evidence="5" ref="1">
    <original>A</original>
    <variation>T</variation>
    <location>
        <position position="322"/>
    </location>
</feature>
<proteinExistence type="evidence at protein level"/>
<accession>Q3EDG5</accession>
<accession>C7G3K4</accession>
<accession>Q9LN06</accession>
<reference key="1">
    <citation type="journal article" date="2009" name="Proc. Natl. Acad. Sci. U.S.A.">
        <title>Identification of tyrosylprotein sulfotransferase in Arabidopsis.</title>
        <authorList>
            <person name="Komori R."/>
            <person name="Amano Y."/>
            <person name="Ogawa-Ohnishi M."/>
            <person name="Matsubayashi Y."/>
        </authorList>
    </citation>
    <scope>NUCLEOTIDE SEQUENCE [MRNA] (ISOFORM 1)</scope>
    <scope>FUNCTION</scope>
    <scope>CATALYTIC ACTIVITY</scope>
    <scope>SUBCELLULAR LOCATION</scope>
    <scope>TOPOLOGY</scope>
    <scope>TISSUE SPECIFICITY</scope>
    <source>
        <strain>cv. Landsberg erecta</strain>
    </source>
</reference>
<reference key="2">
    <citation type="journal article" date="2000" name="Nature">
        <title>Sequence and analysis of chromosome 1 of the plant Arabidopsis thaliana.</title>
        <authorList>
            <person name="Theologis A."/>
            <person name="Ecker J.R."/>
            <person name="Palm C.J."/>
            <person name="Federspiel N.A."/>
            <person name="Kaul S."/>
            <person name="White O."/>
            <person name="Alonso J."/>
            <person name="Altafi H."/>
            <person name="Araujo R."/>
            <person name="Bowman C.L."/>
            <person name="Brooks S.Y."/>
            <person name="Buehler E."/>
            <person name="Chan A."/>
            <person name="Chao Q."/>
            <person name="Chen H."/>
            <person name="Cheuk R.F."/>
            <person name="Chin C.W."/>
            <person name="Chung M.K."/>
            <person name="Conn L."/>
            <person name="Conway A.B."/>
            <person name="Conway A.R."/>
            <person name="Creasy T.H."/>
            <person name="Dewar K."/>
            <person name="Dunn P."/>
            <person name="Etgu P."/>
            <person name="Feldblyum T.V."/>
            <person name="Feng J.-D."/>
            <person name="Fong B."/>
            <person name="Fujii C.Y."/>
            <person name="Gill J.E."/>
            <person name="Goldsmith A.D."/>
            <person name="Haas B."/>
            <person name="Hansen N.F."/>
            <person name="Hughes B."/>
            <person name="Huizar L."/>
            <person name="Hunter J.L."/>
            <person name="Jenkins J."/>
            <person name="Johnson-Hopson C."/>
            <person name="Khan S."/>
            <person name="Khaykin E."/>
            <person name="Kim C.J."/>
            <person name="Koo H.L."/>
            <person name="Kremenetskaia I."/>
            <person name="Kurtz D.B."/>
            <person name="Kwan A."/>
            <person name="Lam B."/>
            <person name="Langin-Hooper S."/>
            <person name="Lee A."/>
            <person name="Lee J.M."/>
            <person name="Lenz C.A."/>
            <person name="Li J.H."/>
            <person name="Li Y.-P."/>
            <person name="Lin X."/>
            <person name="Liu S.X."/>
            <person name="Liu Z.A."/>
            <person name="Luros J.S."/>
            <person name="Maiti R."/>
            <person name="Marziali A."/>
            <person name="Militscher J."/>
            <person name="Miranda M."/>
            <person name="Nguyen M."/>
            <person name="Nierman W.C."/>
            <person name="Osborne B.I."/>
            <person name="Pai G."/>
            <person name="Peterson J."/>
            <person name="Pham P.K."/>
            <person name="Rizzo M."/>
            <person name="Rooney T."/>
            <person name="Rowley D."/>
            <person name="Sakano H."/>
            <person name="Salzberg S.L."/>
            <person name="Schwartz J.R."/>
            <person name="Shinn P."/>
            <person name="Southwick A.M."/>
            <person name="Sun H."/>
            <person name="Tallon L.J."/>
            <person name="Tambunga G."/>
            <person name="Toriumi M.J."/>
            <person name="Town C.D."/>
            <person name="Utterback T."/>
            <person name="Van Aken S."/>
            <person name="Vaysberg M."/>
            <person name="Vysotskaia V.S."/>
            <person name="Walker M."/>
            <person name="Wu D."/>
            <person name="Yu G."/>
            <person name="Fraser C.M."/>
            <person name="Venter J.C."/>
            <person name="Davis R.W."/>
        </authorList>
    </citation>
    <scope>NUCLEOTIDE SEQUENCE [LARGE SCALE GENOMIC DNA]</scope>
    <source>
        <strain>cv. Columbia</strain>
    </source>
</reference>
<reference key="3">
    <citation type="journal article" date="2017" name="Plant J.">
        <title>Araport11: a complete reannotation of the Arabidopsis thaliana reference genome.</title>
        <authorList>
            <person name="Cheng C.Y."/>
            <person name="Krishnakumar V."/>
            <person name="Chan A.P."/>
            <person name="Thibaud-Nissen F."/>
            <person name="Schobel S."/>
            <person name="Town C.D."/>
        </authorList>
    </citation>
    <scope>GENOME REANNOTATION</scope>
    <source>
        <strain>cv. Columbia</strain>
    </source>
</reference>
<reference key="4">
    <citation type="journal article" date="2004" name="Genome Res.">
        <title>Whole genome sequence comparisons and 'full-length' cDNA sequences: a combined approach to evaluate and improve Arabidopsis genome annotation.</title>
        <authorList>
            <person name="Castelli V."/>
            <person name="Aury J.-M."/>
            <person name="Jaillon O."/>
            <person name="Wincker P."/>
            <person name="Clepet C."/>
            <person name="Menard M."/>
            <person name="Cruaud C."/>
            <person name="Quetier F."/>
            <person name="Scarpelli C."/>
            <person name="Schaechter V."/>
            <person name="Temple G."/>
            <person name="Caboche M."/>
            <person name="Weissenbach J."/>
            <person name="Salanoubat M."/>
        </authorList>
    </citation>
    <scope>NUCLEOTIDE SEQUENCE [LARGE SCALE MRNA] (ISOFORM 2)</scope>
    <source>
        <strain>cv. Columbia</strain>
    </source>
</reference>
<comment type="function">
    <text evidence="3">Catalyzes the O-sulfation of tyrosine residues within acidic motifs of polypeptides.</text>
</comment>
<comment type="catalytic activity">
    <reaction evidence="3">
        <text>L-tyrosyl-[protein] + 3'-phosphoadenylyl sulfate = O-sulfo-L-tyrosine-[protein] + adenosine 3',5'-bisphosphate + H(+)</text>
        <dbReference type="Rhea" id="RHEA:16801"/>
        <dbReference type="Rhea" id="RHEA-COMP:10136"/>
        <dbReference type="Rhea" id="RHEA-COMP:11688"/>
        <dbReference type="ChEBI" id="CHEBI:15378"/>
        <dbReference type="ChEBI" id="CHEBI:46858"/>
        <dbReference type="ChEBI" id="CHEBI:58339"/>
        <dbReference type="ChEBI" id="CHEBI:58343"/>
        <dbReference type="ChEBI" id="CHEBI:65286"/>
        <dbReference type="EC" id="2.8.2.20"/>
    </reaction>
</comment>
<comment type="subcellular location">
    <subcellularLocation>
        <location evidence="3">Golgi apparatus membrane</location>
        <topology evidence="3">Single-pass type I membrane protein</topology>
    </subcellularLocation>
</comment>
<comment type="alternative products">
    <event type="alternative splicing"/>
    <isoform>
        <id>Q3EDG5-1</id>
        <name>1</name>
        <sequence type="displayed"/>
    </isoform>
    <isoform>
        <id>Q3EDG5-2</id>
        <name>2</name>
        <sequence type="described" ref="VSP_038231 VSP_038232"/>
    </isoform>
</comment>
<comment type="tissue specificity">
    <text evidence="3">Expressed throughout the plant body, highest levels of expression are in the root apical meristem.</text>
</comment>
<comment type="sequence caution" evidence="5">
    <conflict type="miscellaneous discrepancy">
        <sequence resource="EMBL" id="BX842536"/>
    </conflict>
    <text>Sequencing errors.</text>
</comment>
<protein>
    <recommendedName>
        <fullName>Protein-tyrosine sulfotransferase</fullName>
        <ecNumber evidence="3">2.8.2.20</ecNumber>
    </recommendedName>
    <alternativeName>
        <fullName>Tyrosylprotein sulfotransferase</fullName>
    </alternativeName>
</protein>